<comment type="function">
    <text evidence="1">Catalyzes the interconversion of methylthioribose-1-phosphate (MTR-1-P) into methylthioribulose-1-phosphate (MTRu-1-P).</text>
</comment>
<comment type="catalytic activity">
    <reaction evidence="1">
        <text>5-(methylsulfanyl)-alpha-D-ribose 1-phosphate = 5-(methylsulfanyl)-D-ribulose 1-phosphate</text>
        <dbReference type="Rhea" id="RHEA:19989"/>
        <dbReference type="ChEBI" id="CHEBI:58533"/>
        <dbReference type="ChEBI" id="CHEBI:58548"/>
        <dbReference type="EC" id="5.3.1.23"/>
    </reaction>
</comment>
<comment type="pathway">
    <text evidence="1">Amino-acid biosynthesis; L-methionine biosynthesis via salvage pathway; L-methionine from S-methyl-5-thio-alpha-D-ribose 1-phosphate: step 1/6.</text>
</comment>
<comment type="similarity">
    <text evidence="2">Belongs to the eIF-2B alpha/beta/delta subunits family. MtnA subfamily.</text>
</comment>
<organism>
    <name type="scientific">Fervidobacterium nodosum (strain ATCC 35602 / DSM 5306 / Rt17-B1)</name>
    <dbReference type="NCBI Taxonomy" id="381764"/>
    <lineage>
        <taxon>Bacteria</taxon>
        <taxon>Thermotogati</taxon>
        <taxon>Thermotogota</taxon>
        <taxon>Thermotogae</taxon>
        <taxon>Thermotogales</taxon>
        <taxon>Fervidobacteriaceae</taxon>
        <taxon>Fervidobacterium</taxon>
    </lineage>
</organism>
<gene>
    <name evidence="1" type="primary">mtnA</name>
    <name type="ordered locus">Fnod_1519</name>
</gene>
<protein>
    <recommendedName>
        <fullName evidence="1">Methylthioribose-1-phosphate isomerase</fullName>
        <shortName evidence="1">M1Pi</shortName>
        <shortName evidence="1">MTR-1-P isomerase</shortName>
        <ecNumber evidence="1">5.3.1.23</ecNumber>
    </recommendedName>
    <alternativeName>
        <fullName evidence="1">S-methyl-5-thioribose-1-phosphate isomerase</fullName>
    </alternativeName>
</protein>
<dbReference type="EC" id="5.3.1.23" evidence="1"/>
<dbReference type="EMBL" id="CP000771">
    <property type="protein sequence ID" value="ABS61362.1"/>
    <property type="molecule type" value="Genomic_DNA"/>
</dbReference>
<dbReference type="RefSeq" id="WP_011994667.1">
    <property type="nucleotide sequence ID" value="NC_009718.1"/>
</dbReference>
<dbReference type="SMR" id="A7HN79"/>
<dbReference type="STRING" id="381764.Fnod_1519"/>
<dbReference type="KEGG" id="fno:Fnod_1519"/>
<dbReference type="eggNOG" id="COG0182">
    <property type="taxonomic scope" value="Bacteria"/>
</dbReference>
<dbReference type="HOGENOM" id="CLU_016218_1_2_0"/>
<dbReference type="OrthoDB" id="9803436at2"/>
<dbReference type="UniPathway" id="UPA00904">
    <property type="reaction ID" value="UER00874"/>
</dbReference>
<dbReference type="Proteomes" id="UP000002415">
    <property type="component" value="Chromosome"/>
</dbReference>
<dbReference type="GO" id="GO:0046523">
    <property type="term" value="F:S-methyl-5-thioribose-1-phosphate isomerase activity"/>
    <property type="evidence" value="ECO:0007669"/>
    <property type="project" value="UniProtKB-UniRule"/>
</dbReference>
<dbReference type="GO" id="GO:0019509">
    <property type="term" value="P:L-methionine salvage from methylthioadenosine"/>
    <property type="evidence" value="ECO:0007669"/>
    <property type="project" value="UniProtKB-UniRule"/>
</dbReference>
<dbReference type="FunFam" id="1.20.120.420:FF:000003">
    <property type="entry name" value="Methylthioribose-1-phosphate isomerase"/>
    <property type="match status" value="1"/>
</dbReference>
<dbReference type="FunFam" id="3.40.50.10470:FF:000010">
    <property type="entry name" value="Methylthioribose-1-phosphate isomerase"/>
    <property type="match status" value="1"/>
</dbReference>
<dbReference type="Gene3D" id="1.20.120.420">
    <property type="entry name" value="translation initiation factor eif-2b, domain 1"/>
    <property type="match status" value="1"/>
</dbReference>
<dbReference type="Gene3D" id="3.40.50.10470">
    <property type="entry name" value="Translation initiation factor eif-2b, domain 2"/>
    <property type="match status" value="1"/>
</dbReference>
<dbReference type="HAMAP" id="MF_01678">
    <property type="entry name" value="Salvage_MtnA"/>
    <property type="match status" value="1"/>
</dbReference>
<dbReference type="InterPro" id="IPR000649">
    <property type="entry name" value="IF-2B-related"/>
</dbReference>
<dbReference type="InterPro" id="IPR005251">
    <property type="entry name" value="IF-M1Pi"/>
</dbReference>
<dbReference type="InterPro" id="IPR042529">
    <property type="entry name" value="IF_2B-like_C"/>
</dbReference>
<dbReference type="InterPro" id="IPR011559">
    <property type="entry name" value="Initiation_fac_2B_a/b/d"/>
</dbReference>
<dbReference type="InterPro" id="IPR027363">
    <property type="entry name" value="M1Pi_N"/>
</dbReference>
<dbReference type="InterPro" id="IPR037171">
    <property type="entry name" value="NagB/RpiA_transferase-like"/>
</dbReference>
<dbReference type="NCBIfam" id="TIGR00524">
    <property type="entry name" value="eIF-2B_rel"/>
    <property type="match status" value="1"/>
</dbReference>
<dbReference type="NCBIfam" id="NF004326">
    <property type="entry name" value="PRK05720.1"/>
    <property type="match status" value="1"/>
</dbReference>
<dbReference type="NCBIfam" id="TIGR00512">
    <property type="entry name" value="salvage_mtnA"/>
    <property type="match status" value="1"/>
</dbReference>
<dbReference type="PANTHER" id="PTHR43475">
    <property type="entry name" value="METHYLTHIORIBOSE-1-PHOSPHATE ISOMERASE"/>
    <property type="match status" value="1"/>
</dbReference>
<dbReference type="PANTHER" id="PTHR43475:SF1">
    <property type="entry name" value="METHYLTHIORIBOSE-1-PHOSPHATE ISOMERASE"/>
    <property type="match status" value="1"/>
</dbReference>
<dbReference type="Pfam" id="PF01008">
    <property type="entry name" value="IF-2B"/>
    <property type="match status" value="1"/>
</dbReference>
<dbReference type="SUPFAM" id="SSF100950">
    <property type="entry name" value="NagB/RpiA/CoA transferase-like"/>
    <property type="match status" value="1"/>
</dbReference>
<keyword id="KW-0028">Amino-acid biosynthesis</keyword>
<keyword id="KW-0413">Isomerase</keyword>
<keyword id="KW-0486">Methionine biosynthesis</keyword>
<keyword id="KW-1185">Reference proteome</keyword>
<sequence length="350" mass="38690">MKLKTMTMEWTGDSLILIDQRRLPFEEVYVTCADYRAVALSIKEMVVRGAPAIGATAAFGYVLGAKEILKKSHNYEQVVMQMKNVKETLAKTRPTAVNLFWALERMEKRLIRHGKYEGLVKVLEDEALKIAKEDIEVNKAIGRNGAQLLQDGFTVLTHCNAGALATVDYGTALGVLRAAKEQGKKIKVYADETRPYLQGARLTAWELMKDGFDVTLISDNMAGWVMKQGKINAVIVGADRIAANGDVANKIGTYMVAVLANRHGIPFYVAAPLSTIDMSIKSGKEIPIEERSHEEVLTCGGKRVAPNNVNVYNPAFDVTDHELVTAIITEKGVVYPPYEENIKKLFEEGI</sequence>
<reference key="1">
    <citation type="submission" date="2007-07" db="EMBL/GenBank/DDBJ databases">
        <title>Complete sequence of Fervidobacterium nodosum Rt17-B1.</title>
        <authorList>
            <consortium name="US DOE Joint Genome Institute"/>
            <person name="Copeland A."/>
            <person name="Lucas S."/>
            <person name="Lapidus A."/>
            <person name="Barry K."/>
            <person name="Glavina del Rio T."/>
            <person name="Dalin E."/>
            <person name="Tice H."/>
            <person name="Pitluck S."/>
            <person name="Saunders E."/>
            <person name="Brettin T."/>
            <person name="Bruce D."/>
            <person name="Detter J.C."/>
            <person name="Han C."/>
            <person name="Schmutz J."/>
            <person name="Larimer F."/>
            <person name="Land M."/>
            <person name="Hauser L."/>
            <person name="Kyrpides N."/>
            <person name="Mikhailova N."/>
            <person name="Nelson K."/>
            <person name="Gogarten J.P."/>
            <person name="Noll K."/>
            <person name="Richardson P."/>
        </authorList>
    </citation>
    <scope>NUCLEOTIDE SEQUENCE [LARGE SCALE GENOMIC DNA]</scope>
    <source>
        <strain>ATCC 35602 / DSM 5306 / Rt17-B1</strain>
    </source>
</reference>
<name>MTNA_FERNB</name>
<evidence type="ECO:0000255" key="1">
    <source>
        <dbReference type="HAMAP-Rule" id="MF_01678"/>
    </source>
</evidence>
<evidence type="ECO:0000305" key="2"/>
<feature type="chain" id="PRO_0000357184" description="Methylthioribose-1-phosphate isomerase">
    <location>
        <begin position="1"/>
        <end position="350"/>
    </location>
</feature>
<feature type="active site" description="Proton donor" evidence="1">
    <location>
        <position position="239"/>
    </location>
</feature>
<feature type="binding site" evidence="1">
    <location>
        <begin position="48"/>
        <end position="50"/>
    </location>
    <ligand>
        <name>substrate</name>
    </ligand>
</feature>
<feature type="binding site" evidence="1">
    <location>
        <position position="93"/>
    </location>
    <ligand>
        <name>substrate</name>
    </ligand>
</feature>
<feature type="binding site" evidence="1">
    <location>
        <position position="198"/>
    </location>
    <ligand>
        <name>substrate</name>
    </ligand>
</feature>
<feature type="binding site" evidence="1">
    <location>
        <begin position="249"/>
        <end position="250"/>
    </location>
    <ligand>
        <name>substrate</name>
    </ligand>
</feature>
<feature type="site" description="Transition state stabilizer" evidence="1">
    <location>
        <position position="159"/>
    </location>
</feature>
<accession>A7HN79</accession>
<proteinExistence type="inferred from homology"/>